<sequence length="212" mass="24747">MPPRPRFDRRAPVRELPNINDRINYPQLRVVDADGEQLGVIDREQALEVARERELDLVLVSEKADPPVCRIMDYGKFKFEQEKKAKEAKKKSHQTEVKEVKMRYKIDQHDYDVRIGQAQRFLKAGDKVKCTVIFRGREIQHTALAEVLLRRMAKDLEEPAEVQQPPKREGRNMIMFLTPRKAPLVKKDKDEEVVNKAVRTIPSPARRINTQD</sequence>
<feature type="chain" id="PRO_1000004583" description="Translation initiation factor IF-3">
    <location>
        <begin position="1"/>
        <end position="212"/>
    </location>
</feature>
<keyword id="KW-0963">Cytoplasm</keyword>
<keyword id="KW-0396">Initiation factor</keyword>
<keyword id="KW-0648">Protein biosynthesis</keyword>
<keyword id="KW-1185">Reference proteome</keyword>
<accession>Q0IDZ5</accession>
<evidence type="ECO:0000255" key="1">
    <source>
        <dbReference type="HAMAP-Rule" id="MF_00080"/>
    </source>
</evidence>
<proteinExistence type="inferred from homology"/>
<comment type="function">
    <text evidence="1">IF-3 binds to the 30S ribosomal subunit and shifts the equilibrium between 70S ribosomes and their 50S and 30S subunits in favor of the free subunits, thus enhancing the availability of 30S subunits on which protein synthesis initiation begins.</text>
</comment>
<comment type="subunit">
    <text evidence="1">Monomer.</text>
</comment>
<comment type="subcellular location">
    <subcellularLocation>
        <location evidence="1">Cytoplasm</location>
    </subcellularLocation>
</comment>
<comment type="similarity">
    <text evidence="1">Belongs to the IF-3 family.</text>
</comment>
<reference key="1">
    <citation type="journal article" date="2006" name="Proc. Natl. Acad. Sci. U.S.A.">
        <title>Genome sequence of Synechococcus CC9311: insights into adaptation to a coastal environment.</title>
        <authorList>
            <person name="Palenik B."/>
            <person name="Ren Q."/>
            <person name="Dupont C.L."/>
            <person name="Myers G.S."/>
            <person name="Heidelberg J.F."/>
            <person name="Badger J.H."/>
            <person name="Madupu R."/>
            <person name="Nelson W.C."/>
            <person name="Brinkac L.M."/>
            <person name="Dodson R.J."/>
            <person name="Durkin A.S."/>
            <person name="Daugherty S.C."/>
            <person name="Sullivan S.A."/>
            <person name="Khouri H."/>
            <person name="Mohamoud Y."/>
            <person name="Halpin R."/>
            <person name="Paulsen I.T."/>
        </authorList>
    </citation>
    <scope>NUCLEOTIDE SEQUENCE [LARGE SCALE GENOMIC DNA]</scope>
    <source>
        <strain>CC9311</strain>
    </source>
</reference>
<gene>
    <name evidence="1" type="primary">infC</name>
    <name type="ordered locus">sync_0090</name>
</gene>
<dbReference type="EMBL" id="CP000435">
    <property type="protein sequence ID" value="ABI45868.1"/>
    <property type="molecule type" value="Genomic_DNA"/>
</dbReference>
<dbReference type="RefSeq" id="WP_011618077.1">
    <property type="nucleotide sequence ID" value="NC_008319.1"/>
</dbReference>
<dbReference type="SMR" id="Q0IDZ5"/>
<dbReference type="STRING" id="64471.sync_0090"/>
<dbReference type="KEGG" id="syg:sync_0090"/>
<dbReference type="eggNOG" id="COG0290">
    <property type="taxonomic scope" value="Bacteria"/>
</dbReference>
<dbReference type="HOGENOM" id="CLU_054919_3_2_3"/>
<dbReference type="OrthoDB" id="9806014at2"/>
<dbReference type="Proteomes" id="UP000001961">
    <property type="component" value="Chromosome"/>
</dbReference>
<dbReference type="GO" id="GO:0005829">
    <property type="term" value="C:cytosol"/>
    <property type="evidence" value="ECO:0007669"/>
    <property type="project" value="TreeGrafter"/>
</dbReference>
<dbReference type="GO" id="GO:0016020">
    <property type="term" value="C:membrane"/>
    <property type="evidence" value="ECO:0007669"/>
    <property type="project" value="TreeGrafter"/>
</dbReference>
<dbReference type="GO" id="GO:0043022">
    <property type="term" value="F:ribosome binding"/>
    <property type="evidence" value="ECO:0007669"/>
    <property type="project" value="TreeGrafter"/>
</dbReference>
<dbReference type="GO" id="GO:0003743">
    <property type="term" value="F:translation initiation factor activity"/>
    <property type="evidence" value="ECO:0007669"/>
    <property type="project" value="UniProtKB-UniRule"/>
</dbReference>
<dbReference type="GO" id="GO:0032790">
    <property type="term" value="P:ribosome disassembly"/>
    <property type="evidence" value="ECO:0007669"/>
    <property type="project" value="TreeGrafter"/>
</dbReference>
<dbReference type="FunFam" id="3.10.20.80:FF:000001">
    <property type="entry name" value="Translation initiation factor IF-3"/>
    <property type="match status" value="1"/>
</dbReference>
<dbReference type="FunFam" id="3.30.110.10:FF:000001">
    <property type="entry name" value="Translation initiation factor IF-3"/>
    <property type="match status" value="1"/>
</dbReference>
<dbReference type="Gene3D" id="3.30.110.10">
    <property type="entry name" value="Translation initiation factor 3 (IF-3), C-terminal domain"/>
    <property type="match status" value="1"/>
</dbReference>
<dbReference type="Gene3D" id="3.10.20.80">
    <property type="entry name" value="Translation initiation factor 3 (IF-3), N-terminal domain"/>
    <property type="match status" value="1"/>
</dbReference>
<dbReference type="HAMAP" id="MF_00080">
    <property type="entry name" value="IF_3"/>
    <property type="match status" value="1"/>
</dbReference>
<dbReference type="InterPro" id="IPR036788">
    <property type="entry name" value="T_IF-3_C_sf"/>
</dbReference>
<dbReference type="InterPro" id="IPR036787">
    <property type="entry name" value="T_IF-3_N_sf"/>
</dbReference>
<dbReference type="InterPro" id="IPR019813">
    <property type="entry name" value="Translation_initiation_fac3_CS"/>
</dbReference>
<dbReference type="InterPro" id="IPR001288">
    <property type="entry name" value="Translation_initiation_fac_3"/>
</dbReference>
<dbReference type="InterPro" id="IPR019815">
    <property type="entry name" value="Translation_initiation_fac_3_C"/>
</dbReference>
<dbReference type="InterPro" id="IPR019814">
    <property type="entry name" value="Translation_initiation_fac_3_N"/>
</dbReference>
<dbReference type="NCBIfam" id="TIGR00168">
    <property type="entry name" value="infC"/>
    <property type="match status" value="1"/>
</dbReference>
<dbReference type="PANTHER" id="PTHR10938">
    <property type="entry name" value="TRANSLATION INITIATION FACTOR IF-3"/>
    <property type="match status" value="1"/>
</dbReference>
<dbReference type="PANTHER" id="PTHR10938:SF0">
    <property type="entry name" value="TRANSLATION INITIATION FACTOR IF-3, MITOCHONDRIAL"/>
    <property type="match status" value="1"/>
</dbReference>
<dbReference type="Pfam" id="PF00707">
    <property type="entry name" value="IF3_C"/>
    <property type="match status" value="1"/>
</dbReference>
<dbReference type="Pfam" id="PF05198">
    <property type="entry name" value="IF3_N"/>
    <property type="match status" value="1"/>
</dbReference>
<dbReference type="SUPFAM" id="SSF55200">
    <property type="entry name" value="Translation initiation factor IF3, C-terminal domain"/>
    <property type="match status" value="1"/>
</dbReference>
<dbReference type="SUPFAM" id="SSF54364">
    <property type="entry name" value="Translation initiation factor IF3, N-terminal domain"/>
    <property type="match status" value="1"/>
</dbReference>
<dbReference type="PROSITE" id="PS00938">
    <property type="entry name" value="IF3"/>
    <property type="match status" value="1"/>
</dbReference>
<organism>
    <name type="scientific">Synechococcus sp. (strain CC9311)</name>
    <dbReference type="NCBI Taxonomy" id="64471"/>
    <lineage>
        <taxon>Bacteria</taxon>
        <taxon>Bacillati</taxon>
        <taxon>Cyanobacteriota</taxon>
        <taxon>Cyanophyceae</taxon>
        <taxon>Synechococcales</taxon>
        <taxon>Synechococcaceae</taxon>
        <taxon>Synechococcus</taxon>
    </lineage>
</organism>
<protein>
    <recommendedName>
        <fullName evidence="1">Translation initiation factor IF-3</fullName>
    </recommendedName>
</protein>
<name>IF3_SYNS3</name>